<dbReference type="EC" id="2.1.3.15" evidence="1"/>
<dbReference type="EMBL" id="CP000001">
    <property type="protein sequence ID" value="AAU15929.1"/>
    <property type="molecule type" value="Genomic_DNA"/>
</dbReference>
<dbReference type="RefSeq" id="WP_000818794.1">
    <property type="nucleotide sequence ID" value="NZ_CP009968.1"/>
</dbReference>
<dbReference type="SMR" id="Q633J7"/>
<dbReference type="GeneID" id="75087757"/>
<dbReference type="KEGG" id="bcz:BCE33L4341"/>
<dbReference type="PATRIC" id="fig|288681.22.peg.1031"/>
<dbReference type="UniPathway" id="UPA00655">
    <property type="reaction ID" value="UER00711"/>
</dbReference>
<dbReference type="Proteomes" id="UP000002612">
    <property type="component" value="Chromosome"/>
</dbReference>
<dbReference type="GO" id="GO:0009317">
    <property type="term" value="C:acetyl-CoA carboxylase complex"/>
    <property type="evidence" value="ECO:0007669"/>
    <property type="project" value="InterPro"/>
</dbReference>
<dbReference type="GO" id="GO:0003989">
    <property type="term" value="F:acetyl-CoA carboxylase activity"/>
    <property type="evidence" value="ECO:0007669"/>
    <property type="project" value="InterPro"/>
</dbReference>
<dbReference type="GO" id="GO:0005524">
    <property type="term" value="F:ATP binding"/>
    <property type="evidence" value="ECO:0007669"/>
    <property type="project" value="UniProtKB-KW"/>
</dbReference>
<dbReference type="GO" id="GO:0016743">
    <property type="term" value="F:carboxyl- or carbamoyltransferase activity"/>
    <property type="evidence" value="ECO:0007669"/>
    <property type="project" value="UniProtKB-UniRule"/>
</dbReference>
<dbReference type="GO" id="GO:0006633">
    <property type="term" value="P:fatty acid biosynthetic process"/>
    <property type="evidence" value="ECO:0007669"/>
    <property type="project" value="UniProtKB-KW"/>
</dbReference>
<dbReference type="GO" id="GO:2001295">
    <property type="term" value="P:malonyl-CoA biosynthetic process"/>
    <property type="evidence" value="ECO:0007669"/>
    <property type="project" value="UniProtKB-UniRule"/>
</dbReference>
<dbReference type="Gene3D" id="3.90.226.10">
    <property type="entry name" value="2-enoyl-CoA Hydratase, Chain A, domain 1"/>
    <property type="match status" value="1"/>
</dbReference>
<dbReference type="HAMAP" id="MF_00823">
    <property type="entry name" value="AcetylCoA_CT_alpha"/>
    <property type="match status" value="1"/>
</dbReference>
<dbReference type="InterPro" id="IPR001095">
    <property type="entry name" value="Acetyl_CoA_COase_a_su"/>
</dbReference>
<dbReference type="InterPro" id="IPR029045">
    <property type="entry name" value="ClpP/crotonase-like_dom_sf"/>
</dbReference>
<dbReference type="InterPro" id="IPR011763">
    <property type="entry name" value="COA_CT_C"/>
</dbReference>
<dbReference type="NCBIfam" id="TIGR00513">
    <property type="entry name" value="accA"/>
    <property type="match status" value="1"/>
</dbReference>
<dbReference type="NCBIfam" id="NF041504">
    <property type="entry name" value="AccA_sub"/>
    <property type="match status" value="1"/>
</dbReference>
<dbReference type="NCBIfam" id="NF004344">
    <property type="entry name" value="PRK05724.1"/>
    <property type="match status" value="1"/>
</dbReference>
<dbReference type="PANTHER" id="PTHR42853">
    <property type="entry name" value="ACETYL-COENZYME A CARBOXYLASE CARBOXYL TRANSFERASE SUBUNIT ALPHA"/>
    <property type="match status" value="1"/>
</dbReference>
<dbReference type="PANTHER" id="PTHR42853:SF3">
    <property type="entry name" value="ACETYL-COENZYME A CARBOXYLASE CARBOXYL TRANSFERASE SUBUNIT ALPHA, CHLOROPLASTIC"/>
    <property type="match status" value="1"/>
</dbReference>
<dbReference type="Pfam" id="PF03255">
    <property type="entry name" value="ACCA"/>
    <property type="match status" value="1"/>
</dbReference>
<dbReference type="PRINTS" id="PR01069">
    <property type="entry name" value="ACCCTRFRASEA"/>
</dbReference>
<dbReference type="SUPFAM" id="SSF52096">
    <property type="entry name" value="ClpP/crotonase"/>
    <property type="match status" value="1"/>
</dbReference>
<dbReference type="PROSITE" id="PS50989">
    <property type="entry name" value="COA_CT_CTER"/>
    <property type="match status" value="1"/>
</dbReference>
<comment type="function">
    <text evidence="1">Component of the acetyl coenzyme A carboxylase (ACC) complex. First, biotin carboxylase catalyzes the carboxylation of biotin on its carrier protein (BCCP) and then the CO(2) group is transferred by the carboxyltransferase to acetyl-CoA to form malonyl-CoA.</text>
</comment>
<comment type="catalytic activity">
    <reaction evidence="1">
        <text>N(6)-carboxybiotinyl-L-lysyl-[protein] + acetyl-CoA = N(6)-biotinyl-L-lysyl-[protein] + malonyl-CoA</text>
        <dbReference type="Rhea" id="RHEA:54728"/>
        <dbReference type="Rhea" id="RHEA-COMP:10505"/>
        <dbReference type="Rhea" id="RHEA-COMP:10506"/>
        <dbReference type="ChEBI" id="CHEBI:57288"/>
        <dbReference type="ChEBI" id="CHEBI:57384"/>
        <dbReference type="ChEBI" id="CHEBI:83144"/>
        <dbReference type="ChEBI" id="CHEBI:83145"/>
        <dbReference type="EC" id="2.1.3.15"/>
    </reaction>
</comment>
<comment type="pathway">
    <text evidence="1">Lipid metabolism; malonyl-CoA biosynthesis; malonyl-CoA from acetyl-CoA: step 1/1.</text>
</comment>
<comment type="subunit">
    <text evidence="1">Acetyl-CoA carboxylase is a heterohexamer composed of biotin carboxyl carrier protein (AccB), biotin carboxylase (AccC) and two subunits each of ACCase subunit alpha (AccA) and ACCase subunit beta (AccD).</text>
</comment>
<comment type="subcellular location">
    <subcellularLocation>
        <location evidence="1">Cytoplasm</location>
    </subcellularLocation>
</comment>
<comment type="similarity">
    <text evidence="1">Belongs to the AccA family.</text>
</comment>
<proteinExistence type="inferred from homology"/>
<gene>
    <name evidence="1" type="primary">accA</name>
    <name type="ordered locus">BCE33L4341</name>
</gene>
<evidence type="ECO:0000255" key="1">
    <source>
        <dbReference type="HAMAP-Rule" id="MF_00823"/>
    </source>
</evidence>
<evidence type="ECO:0000255" key="2">
    <source>
        <dbReference type="PROSITE-ProRule" id="PRU01137"/>
    </source>
</evidence>
<protein>
    <recommendedName>
        <fullName evidence="1">Acetyl-coenzyme A carboxylase carboxyl transferase subunit alpha</fullName>
        <shortName evidence="1">ACCase subunit alpha</shortName>
        <shortName evidence="1">Acetyl-CoA carboxylase carboxyltransferase subunit alpha</shortName>
        <ecNumber evidence="1">2.1.3.15</ecNumber>
    </recommendedName>
</protein>
<organism>
    <name type="scientific">Bacillus cereus (strain ZK / E33L)</name>
    <dbReference type="NCBI Taxonomy" id="288681"/>
    <lineage>
        <taxon>Bacteria</taxon>
        <taxon>Bacillati</taxon>
        <taxon>Bacillota</taxon>
        <taxon>Bacilli</taxon>
        <taxon>Bacillales</taxon>
        <taxon>Bacillaceae</taxon>
        <taxon>Bacillus</taxon>
        <taxon>Bacillus cereus group</taxon>
    </lineage>
</organism>
<sequence length="324" mass="36470">MAELEFEKPVVELRNKIRELKDYTKNSQMDFSEEIRILEDKLENLEEDIYGNMKVWDRVQIARHAERPTTLDYIEHLFTDFFECHGDRLFGDDAAIVGGIAKYKGMPVTVIGHQRGKDTKENIRRNFGMPHPEGYRKALRLMKQAEKFNRPIICFIDTKGAYPGKAAEERGQSEAIARNLFEMAGLTVPVICIVIGEGGSGGALGLGVGDYIHMLENSTYSVITPEGAAAILWKDAGKAKEAAEAMRITAADLKELGVIDEIIPEAKGGAHRNVLKQSENIDLMLRKTFEQLNGISKDELIEKRYEKYMKIGQVSFSNASIWIK</sequence>
<keyword id="KW-0067">ATP-binding</keyword>
<keyword id="KW-0963">Cytoplasm</keyword>
<keyword id="KW-0275">Fatty acid biosynthesis</keyword>
<keyword id="KW-0276">Fatty acid metabolism</keyword>
<keyword id="KW-0444">Lipid biosynthesis</keyword>
<keyword id="KW-0443">Lipid metabolism</keyword>
<keyword id="KW-0547">Nucleotide-binding</keyword>
<keyword id="KW-0808">Transferase</keyword>
<reference key="1">
    <citation type="journal article" date="2006" name="J. Bacteriol.">
        <title>Pathogenomic sequence analysis of Bacillus cereus and Bacillus thuringiensis isolates closely related to Bacillus anthracis.</title>
        <authorList>
            <person name="Han C.S."/>
            <person name="Xie G."/>
            <person name="Challacombe J.F."/>
            <person name="Altherr M.R."/>
            <person name="Bhotika S.S."/>
            <person name="Bruce D."/>
            <person name="Campbell C.S."/>
            <person name="Campbell M.L."/>
            <person name="Chen J."/>
            <person name="Chertkov O."/>
            <person name="Cleland C."/>
            <person name="Dimitrijevic M."/>
            <person name="Doggett N.A."/>
            <person name="Fawcett J.J."/>
            <person name="Glavina T."/>
            <person name="Goodwin L.A."/>
            <person name="Hill K.K."/>
            <person name="Hitchcock P."/>
            <person name="Jackson P.J."/>
            <person name="Keim P."/>
            <person name="Kewalramani A.R."/>
            <person name="Longmire J."/>
            <person name="Lucas S."/>
            <person name="Malfatti S."/>
            <person name="McMurry K."/>
            <person name="Meincke L.J."/>
            <person name="Misra M."/>
            <person name="Moseman B.L."/>
            <person name="Mundt M."/>
            <person name="Munk A.C."/>
            <person name="Okinaka R.T."/>
            <person name="Parson-Quintana B."/>
            <person name="Reilly L.P."/>
            <person name="Richardson P."/>
            <person name="Robinson D.L."/>
            <person name="Rubin E."/>
            <person name="Saunders E."/>
            <person name="Tapia R."/>
            <person name="Tesmer J.G."/>
            <person name="Thayer N."/>
            <person name="Thompson L.S."/>
            <person name="Tice H."/>
            <person name="Ticknor L.O."/>
            <person name="Wills P.L."/>
            <person name="Brettin T.S."/>
            <person name="Gilna P."/>
        </authorList>
    </citation>
    <scope>NUCLEOTIDE SEQUENCE [LARGE SCALE GENOMIC DNA]</scope>
    <source>
        <strain>ZK / E33L</strain>
    </source>
</reference>
<feature type="chain" id="PRO_0000223731" description="Acetyl-coenzyme A carboxylase carboxyl transferase subunit alpha">
    <location>
        <begin position="1"/>
        <end position="324"/>
    </location>
</feature>
<feature type="domain" description="CoA carboxyltransferase C-terminal" evidence="2">
    <location>
        <begin position="37"/>
        <end position="291"/>
    </location>
</feature>
<accession>Q633J7</accession>
<name>ACCA_BACCZ</name>